<comment type="function">
    <text evidence="4 5 6 7">Key stress-response regulator that plays an important role in multiple regulatory networks in response to different stress conditions (PubMed:20688819, PubMed:25899163). Involved in preservation of envelope integrity and tolerance to surface stress (PubMed:25899163). Essential for macrophage infection and facilitates intracellular growth of M.tuberculosis (PubMed:20688819, PubMed:25899163). Controls the expression of several protease and chaperone systems, including clpP1, clpP2, clpC1, ptrB, Rv1043c, acr2, clpB, Rv3269 and the clgR-pspA-rv2743c-rv2742c region (PubMed:20688819, PubMed:23560081, PubMed:25899163). Also plays an essential role in RecA/LexA-independent DNA repair mechanism by inducing expression of DNA repair genes in response to DNA damage (PubMed:21771781).</text>
</comment>
<comment type="subunit">
    <text evidence="7">Interacts with PspA.</text>
</comment>
<comment type="induction">
    <text evidence="2 3 7">Expression requires SigE (PubMed:11489128, PubMed:25899163). Induced by carbonyl cyanide m-chlorophenyl hydrazone (CCCP) (PubMed:25899163). Induced in response to thioridazine (THZ) (PubMed:20386700).</text>
</comment>
<comment type="disruption phenotype">
    <text evidence="4 7">Inactivation of the gene increases M.tuberculosis susceptibility to the intramacrophage environment (PubMed:20688819, PubMed:25899163). Deletion mutant shows a significantly reduced ability to arrest the acidification of the phagosome (PubMed:20688819).</text>
</comment>
<reference key="1">
    <citation type="journal article" date="1998" name="Nature">
        <title>Deciphering the biology of Mycobacterium tuberculosis from the complete genome sequence.</title>
        <authorList>
            <person name="Cole S.T."/>
            <person name="Brosch R."/>
            <person name="Parkhill J."/>
            <person name="Garnier T."/>
            <person name="Churcher C.M."/>
            <person name="Harris D.E."/>
            <person name="Gordon S.V."/>
            <person name="Eiglmeier K."/>
            <person name="Gas S."/>
            <person name="Barry C.E. III"/>
            <person name="Tekaia F."/>
            <person name="Badcock K."/>
            <person name="Basham D."/>
            <person name="Brown D."/>
            <person name="Chillingworth T."/>
            <person name="Connor R."/>
            <person name="Davies R.M."/>
            <person name="Devlin K."/>
            <person name="Feltwell T."/>
            <person name="Gentles S."/>
            <person name="Hamlin N."/>
            <person name="Holroyd S."/>
            <person name="Hornsby T."/>
            <person name="Jagels K."/>
            <person name="Krogh A."/>
            <person name="McLean J."/>
            <person name="Moule S."/>
            <person name="Murphy L.D."/>
            <person name="Oliver S."/>
            <person name="Osborne J."/>
            <person name="Quail M.A."/>
            <person name="Rajandream M.A."/>
            <person name="Rogers J."/>
            <person name="Rutter S."/>
            <person name="Seeger K."/>
            <person name="Skelton S."/>
            <person name="Squares S."/>
            <person name="Squares R."/>
            <person name="Sulston J.E."/>
            <person name="Taylor K."/>
            <person name="Whitehead S."/>
            <person name="Barrell B.G."/>
        </authorList>
    </citation>
    <scope>NUCLEOTIDE SEQUENCE [LARGE SCALE GENOMIC DNA]</scope>
    <source>
        <strain>ATCC 25618 / H37Rv</strain>
    </source>
</reference>
<reference key="2">
    <citation type="journal article" date="2001" name="Mol. Microbiol.">
        <title>The Mycobacterium tuberculosis ECF sigma factor sigmaE: role in global gene expression and survival in macrophages.</title>
        <authorList>
            <person name="Manganelli R."/>
            <person name="Voskuil M.I."/>
            <person name="Schoolnik G.K."/>
            <person name="Smith I."/>
        </authorList>
    </citation>
    <scope>INDUCTION BY SIGE</scope>
    <source>
        <strain>ATCC 25618 / H37Rv</strain>
    </source>
</reference>
<reference key="3">
    <citation type="journal article" date="2010" name="PLoS ONE">
        <title>A Mycobacterium tuberculosis sigma factor network responds to cell-envelope damage by the promising anti-mycobacterial thioridazine.</title>
        <authorList>
            <person name="Dutta N.K."/>
            <person name="Mehra S."/>
            <person name="Kaushal D."/>
        </authorList>
    </citation>
    <scope>INDUCTION</scope>
</reference>
<reference key="4">
    <citation type="journal article" date="2010" name="Microbiology">
        <title>ClgR regulation of chaperone and protease systems is essential for Mycobacterium tuberculosis parasitism of the macrophage.</title>
        <authorList>
            <person name="Estorninho M."/>
            <person name="Smith H."/>
            <person name="Thole J."/>
            <person name="Harders-Westerveen J."/>
            <person name="Kierzek A."/>
            <person name="Butler R.E."/>
            <person name="Neyrolles O."/>
            <person name="Stewart G.R."/>
        </authorList>
    </citation>
    <scope>FUNCTION</scope>
    <scope>DISRUPTION PHENOTYPE</scope>
    <source>
        <strain>H37Rv</strain>
    </source>
</reference>
<reference key="5">
    <citation type="journal article" date="2011" name="J. Biol. Chem.">
        <title>ClpR protein-like regulator specifically recognizes RecA protein-independent promoter motif and broadly regulates expression of DNA damage-inducible genes in mycobacteria.</title>
        <authorList>
            <person name="Wang Y."/>
            <person name="Huang Y."/>
            <person name="Xue C."/>
            <person name="He Y."/>
            <person name="He Z.G."/>
        </authorList>
    </citation>
    <scope>FUNCTION</scope>
</reference>
<reference key="6">
    <citation type="journal article" date="2013" name="PLoS ONE">
        <title>Mycobacterium tuberculosis ClpP proteases are co-transcribed but exhibit different substrate specificities.</title>
        <authorList>
            <person name="Personne Y."/>
            <person name="Brown A.C."/>
            <person name="Schuessler D.L."/>
            <person name="Parish T."/>
        </authorList>
    </citation>
    <scope>FUNCTION</scope>
    <source>
        <strain>H37Rv</strain>
    </source>
</reference>
<reference key="7">
    <citation type="journal article" date="2015" name="Mol. Microbiol.">
        <title>The Psp system of Mycobacterium tuberculosis integrates envelope stress-sensing and envelope-preserving functions.</title>
        <authorList>
            <person name="Datta P."/>
            <person name="Ravi J."/>
            <person name="Guerrini V."/>
            <person name="Chauhan R."/>
            <person name="Neiditch M.B."/>
            <person name="Shell S.S."/>
            <person name="Fortune S.M."/>
            <person name="Hancioglu B."/>
            <person name="Igoshin O.A."/>
            <person name="Gennaro M.L."/>
        </authorList>
    </citation>
    <scope>FUNCTION</scope>
    <scope>INTERACTION WITH PSPA</scope>
    <scope>INDUCTION</scope>
    <scope>DISRUPTION PHENOTYPE</scope>
</reference>
<reference key="8">
    <citation type="journal article" date="2011" name="Mol. Cell. Proteomics">
        <title>Proteogenomic analysis of Mycobacterium tuberculosis by high resolution mass spectrometry.</title>
        <authorList>
            <person name="Kelkar D.S."/>
            <person name="Kumar D."/>
            <person name="Kumar P."/>
            <person name="Balakrishnan L."/>
            <person name="Muthusamy B."/>
            <person name="Yadav A.K."/>
            <person name="Shrivastava P."/>
            <person name="Marimuthu A."/>
            <person name="Anand S."/>
            <person name="Sundaram H."/>
            <person name="Kingsbury R."/>
            <person name="Harsha H.C."/>
            <person name="Nair B."/>
            <person name="Prasad T.S."/>
            <person name="Chauhan D.S."/>
            <person name="Katoch K."/>
            <person name="Katoch V.M."/>
            <person name="Kumar P."/>
            <person name="Chaerkady R."/>
            <person name="Ramachandran S."/>
            <person name="Dash D."/>
            <person name="Pandey A."/>
        </authorList>
    </citation>
    <scope>IDENTIFICATION BY MASS SPECTROMETRY [LARGE SCALE ANALYSIS]</scope>
    <source>
        <strain>ATCC 25618 / H37Rv</strain>
    </source>
</reference>
<dbReference type="EMBL" id="AL123456">
    <property type="protein sequence ID" value="CCP45544.1"/>
    <property type="molecule type" value="Genomic_DNA"/>
</dbReference>
<dbReference type="PIR" id="H70878">
    <property type="entry name" value="H70878"/>
</dbReference>
<dbReference type="RefSeq" id="NP_217261.1">
    <property type="nucleotide sequence ID" value="NC_000962.3"/>
</dbReference>
<dbReference type="RefSeq" id="WP_003414032.1">
    <property type="nucleotide sequence ID" value="NZ_NVQJ01000020.1"/>
</dbReference>
<dbReference type="SMR" id="P9WMH7"/>
<dbReference type="STRING" id="83332.Rv2745c"/>
<dbReference type="PaxDb" id="83332-Rv2745c"/>
<dbReference type="DNASU" id="888315"/>
<dbReference type="GeneID" id="45426732"/>
<dbReference type="GeneID" id="888315"/>
<dbReference type="KEGG" id="mtu:Rv2745c"/>
<dbReference type="KEGG" id="mtv:RVBD_2745c"/>
<dbReference type="TubercuList" id="Rv2745c"/>
<dbReference type="eggNOG" id="COG1396">
    <property type="taxonomic scope" value="Bacteria"/>
</dbReference>
<dbReference type="InParanoid" id="P9WMH7"/>
<dbReference type="OrthoDB" id="3188736at2"/>
<dbReference type="PhylomeDB" id="P9WMH7"/>
<dbReference type="Proteomes" id="UP000001584">
    <property type="component" value="Chromosome"/>
</dbReference>
<dbReference type="GO" id="GO:0003677">
    <property type="term" value="F:DNA binding"/>
    <property type="evidence" value="ECO:0000314"/>
    <property type="project" value="MTBBASE"/>
</dbReference>
<dbReference type="GO" id="GO:0043565">
    <property type="term" value="F:sequence-specific DNA binding"/>
    <property type="evidence" value="ECO:0000314"/>
    <property type="project" value="MTBBASE"/>
</dbReference>
<dbReference type="GO" id="GO:0051701">
    <property type="term" value="P:biological process involved in interaction with host"/>
    <property type="evidence" value="ECO:0000314"/>
    <property type="project" value="MTBBASE"/>
</dbReference>
<dbReference type="GO" id="GO:0085016">
    <property type="term" value="P:dormancy exit of symbiont in host"/>
    <property type="evidence" value="ECO:0000314"/>
    <property type="project" value="MTBBASE"/>
</dbReference>
<dbReference type="GO" id="GO:0045893">
    <property type="term" value="P:positive regulation of DNA-templated transcription"/>
    <property type="evidence" value="ECO:0000314"/>
    <property type="project" value="MTBBASE"/>
</dbReference>
<dbReference type="GO" id="GO:0006355">
    <property type="term" value="P:regulation of DNA-templated transcription"/>
    <property type="evidence" value="ECO:0000314"/>
    <property type="project" value="UniProtKB"/>
</dbReference>
<dbReference type="GO" id="GO:0061136">
    <property type="term" value="P:regulation of proteasomal protein catabolic process"/>
    <property type="evidence" value="ECO:0000270"/>
    <property type="project" value="MTBBASE"/>
</dbReference>
<dbReference type="GO" id="GO:0090062">
    <property type="term" value="P:regulation of trehalose metabolic process"/>
    <property type="evidence" value="ECO:0000270"/>
    <property type="project" value="MTBBASE"/>
</dbReference>
<dbReference type="GO" id="GO:0010447">
    <property type="term" value="P:response to acidic pH"/>
    <property type="evidence" value="ECO:0000270"/>
    <property type="project" value="UniProtKB"/>
</dbReference>
<dbReference type="GO" id="GO:0009408">
    <property type="term" value="P:response to heat"/>
    <property type="evidence" value="ECO:0000270"/>
    <property type="project" value="UniProtKB"/>
</dbReference>
<dbReference type="GO" id="GO:0006979">
    <property type="term" value="P:response to oxidative stress"/>
    <property type="evidence" value="ECO:0000270"/>
    <property type="project" value="UniProtKB"/>
</dbReference>
<dbReference type="GO" id="GO:0052170">
    <property type="term" value="P:symbiont-mediated suppression of host innate immune response"/>
    <property type="evidence" value="ECO:0000314"/>
    <property type="project" value="MTBBASE"/>
</dbReference>
<dbReference type="CDD" id="cd00093">
    <property type="entry name" value="HTH_XRE"/>
    <property type="match status" value="1"/>
</dbReference>
<dbReference type="FunFam" id="1.10.260.40:FF:000032">
    <property type="entry name" value="Transcriptional regulator ClgR"/>
    <property type="match status" value="1"/>
</dbReference>
<dbReference type="Gene3D" id="1.10.260.40">
    <property type="entry name" value="lambda repressor-like DNA-binding domains"/>
    <property type="match status" value="1"/>
</dbReference>
<dbReference type="InterPro" id="IPR049655">
    <property type="entry name" value="ClgR-like"/>
</dbReference>
<dbReference type="InterPro" id="IPR001387">
    <property type="entry name" value="Cro/C1-type_HTH"/>
</dbReference>
<dbReference type="InterPro" id="IPR010982">
    <property type="entry name" value="Lambda_DNA-bd_dom_sf"/>
</dbReference>
<dbReference type="NCBIfam" id="NF041677">
    <property type="entry name" value="trans_regClgR"/>
    <property type="match status" value="1"/>
</dbReference>
<dbReference type="Pfam" id="PF01381">
    <property type="entry name" value="HTH_3"/>
    <property type="match status" value="1"/>
</dbReference>
<dbReference type="SMART" id="SM00530">
    <property type="entry name" value="HTH_XRE"/>
    <property type="match status" value="1"/>
</dbReference>
<dbReference type="SUPFAM" id="SSF47413">
    <property type="entry name" value="lambda repressor-like DNA-binding domains"/>
    <property type="match status" value="1"/>
</dbReference>
<dbReference type="PROSITE" id="PS50943">
    <property type="entry name" value="HTH_CROC1"/>
    <property type="match status" value="1"/>
</dbReference>
<protein>
    <recommendedName>
        <fullName evidence="10">Transcriptional regulator ClgR</fullName>
    </recommendedName>
    <alternativeName>
        <fullName evidence="9">ClpR-like regulator</fullName>
    </alternativeName>
    <alternativeName>
        <fullName evidence="8">clp gene regulator</fullName>
    </alternativeName>
</protein>
<organism>
    <name type="scientific">Mycobacterium tuberculosis (strain ATCC 25618 / H37Rv)</name>
    <dbReference type="NCBI Taxonomy" id="83332"/>
    <lineage>
        <taxon>Bacteria</taxon>
        <taxon>Bacillati</taxon>
        <taxon>Actinomycetota</taxon>
        <taxon>Actinomycetes</taxon>
        <taxon>Mycobacteriales</taxon>
        <taxon>Mycobacteriaceae</taxon>
        <taxon>Mycobacterium</taxon>
        <taxon>Mycobacterium tuberculosis complex</taxon>
    </lineage>
</organism>
<gene>
    <name type="primary">clgR</name>
    <name type="ordered locus">Rv2745c</name>
</gene>
<evidence type="ECO:0000255" key="1">
    <source>
        <dbReference type="PROSITE-ProRule" id="PRU00257"/>
    </source>
</evidence>
<evidence type="ECO:0000269" key="2">
    <source>
    </source>
</evidence>
<evidence type="ECO:0000269" key="3">
    <source>
    </source>
</evidence>
<evidence type="ECO:0000269" key="4">
    <source>
    </source>
</evidence>
<evidence type="ECO:0000269" key="5">
    <source>
    </source>
</evidence>
<evidence type="ECO:0000269" key="6">
    <source>
    </source>
</evidence>
<evidence type="ECO:0000269" key="7">
    <source>
    </source>
</evidence>
<evidence type="ECO:0000303" key="8">
    <source>
    </source>
</evidence>
<evidence type="ECO:0000303" key="9">
    <source>
    </source>
</evidence>
<evidence type="ECO:0000305" key="10"/>
<proteinExistence type="evidence at protein level"/>
<sequence>MAALVREVVGDVLRGARMSQGRTLREVSDSARVSLGYLSEIERGRKEPSSELLSAICTALQLPLSVVLIDAGERMARQERLARATPAGRATGATIDASTKVVIAPVVSLAVA</sequence>
<name>CLGR_MYCTU</name>
<accession>P9WMH7</accession>
<accession>F2GPH7</accession>
<accession>O33287</accession>
<accession>Q7D6N6</accession>
<feature type="chain" id="PRO_0000423653" description="Transcriptional regulator ClgR">
    <location>
        <begin position="1"/>
        <end position="112"/>
    </location>
</feature>
<feature type="domain" description="HTH cro/C1-type" evidence="1">
    <location>
        <begin position="13"/>
        <end position="67"/>
    </location>
</feature>
<feature type="DNA-binding region" description="H-T-H motif" evidence="1">
    <location>
        <begin position="24"/>
        <end position="43"/>
    </location>
</feature>
<keyword id="KW-0238">DNA-binding</keyword>
<keyword id="KW-1185">Reference proteome</keyword>
<keyword id="KW-0346">Stress response</keyword>
<keyword id="KW-0804">Transcription</keyword>
<keyword id="KW-0805">Transcription regulation</keyword>